<name>ACPM_DROME</name>
<reference key="1">
    <citation type="journal article" date="1999" name="Mol. Gen. Genet.">
        <title>Identification of nuclear genes encoding mitochondrial proteins: isolation of a collection of D. melanogaster cDNAs homologous to sequences in the Human Gene Index database.</title>
        <authorList>
            <person name="Caggese C."/>
            <person name="Ragone G."/>
            <person name="Perrini B."/>
            <person name="Moschetti R."/>
            <person name="de Pinto V."/>
            <person name="Caizzi R."/>
            <person name="Barsanti P."/>
        </authorList>
    </citation>
    <scope>NUCLEOTIDE SEQUENCE [GENOMIC DNA]</scope>
    <source>
        <tissue>Ovary</tissue>
    </source>
</reference>
<reference key="2">
    <citation type="submission" date="1997-07" db="EMBL/GenBank/DDBJ databases">
        <title>Two forms of cDNA and the sequence of Drosophila melanogaster gene for acyl-carrier subunit of NADH:ubiquinone oxidoreductase show evidence of alternatively spliced forms.</title>
        <authorList>
            <person name="Ragone G."/>
            <person name="Caizzi R."/>
            <person name="Caggese C."/>
        </authorList>
    </citation>
    <scope>NUCLEOTIDE SEQUENCE [MRNA] (ISOFORMS 1 AND 2)</scope>
</reference>
<reference key="3">
    <citation type="journal article" date="2000" name="Science">
        <title>The genome sequence of Drosophila melanogaster.</title>
        <authorList>
            <person name="Adams M.D."/>
            <person name="Celniker S.E."/>
            <person name="Holt R.A."/>
            <person name="Evans C.A."/>
            <person name="Gocayne J.D."/>
            <person name="Amanatides P.G."/>
            <person name="Scherer S.E."/>
            <person name="Li P.W."/>
            <person name="Hoskins R.A."/>
            <person name="Galle R.F."/>
            <person name="George R.A."/>
            <person name="Lewis S.E."/>
            <person name="Richards S."/>
            <person name="Ashburner M."/>
            <person name="Henderson S.N."/>
            <person name="Sutton G.G."/>
            <person name="Wortman J.R."/>
            <person name="Yandell M.D."/>
            <person name="Zhang Q."/>
            <person name="Chen L.X."/>
            <person name="Brandon R.C."/>
            <person name="Rogers Y.-H.C."/>
            <person name="Blazej R.G."/>
            <person name="Champe M."/>
            <person name="Pfeiffer B.D."/>
            <person name="Wan K.H."/>
            <person name="Doyle C."/>
            <person name="Baxter E.G."/>
            <person name="Helt G."/>
            <person name="Nelson C.R."/>
            <person name="Miklos G.L.G."/>
            <person name="Abril J.F."/>
            <person name="Agbayani A."/>
            <person name="An H.-J."/>
            <person name="Andrews-Pfannkoch C."/>
            <person name="Baldwin D."/>
            <person name="Ballew R.M."/>
            <person name="Basu A."/>
            <person name="Baxendale J."/>
            <person name="Bayraktaroglu L."/>
            <person name="Beasley E.M."/>
            <person name="Beeson K.Y."/>
            <person name="Benos P.V."/>
            <person name="Berman B.P."/>
            <person name="Bhandari D."/>
            <person name="Bolshakov S."/>
            <person name="Borkova D."/>
            <person name="Botchan M.R."/>
            <person name="Bouck J."/>
            <person name="Brokstein P."/>
            <person name="Brottier P."/>
            <person name="Burtis K.C."/>
            <person name="Busam D.A."/>
            <person name="Butler H."/>
            <person name="Cadieu E."/>
            <person name="Center A."/>
            <person name="Chandra I."/>
            <person name="Cherry J.M."/>
            <person name="Cawley S."/>
            <person name="Dahlke C."/>
            <person name="Davenport L.B."/>
            <person name="Davies P."/>
            <person name="de Pablos B."/>
            <person name="Delcher A."/>
            <person name="Deng Z."/>
            <person name="Mays A.D."/>
            <person name="Dew I."/>
            <person name="Dietz S.M."/>
            <person name="Dodson K."/>
            <person name="Doup L.E."/>
            <person name="Downes M."/>
            <person name="Dugan-Rocha S."/>
            <person name="Dunkov B.C."/>
            <person name="Dunn P."/>
            <person name="Durbin K.J."/>
            <person name="Evangelista C.C."/>
            <person name="Ferraz C."/>
            <person name="Ferriera S."/>
            <person name="Fleischmann W."/>
            <person name="Fosler C."/>
            <person name="Gabrielian A.E."/>
            <person name="Garg N.S."/>
            <person name="Gelbart W.M."/>
            <person name="Glasser K."/>
            <person name="Glodek A."/>
            <person name="Gong F."/>
            <person name="Gorrell J.H."/>
            <person name="Gu Z."/>
            <person name="Guan P."/>
            <person name="Harris M."/>
            <person name="Harris N.L."/>
            <person name="Harvey D.A."/>
            <person name="Heiman T.J."/>
            <person name="Hernandez J.R."/>
            <person name="Houck J."/>
            <person name="Hostin D."/>
            <person name="Houston K.A."/>
            <person name="Howland T.J."/>
            <person name="Wei M.-H."/>
            <person name="Ibegwam C."/>
            <person name="Jalali M."/>
            <person name="Kalush F."/>
            <person name="Karpen G.H."/>
            <person name="Ke Z."/>
            <person name="Kennison J.A."/>
            <person name="Ketchum K.A."/>
            <person name="Kimmel B.E."/>
            <person name="Kodira C.D."/>
            <person name="Kraft C.L."/>
            <person name="Kravitz S."/>
            <person name="Kulp D."/>
            <person name="Lai Z."/>
            <person name="Lasko P."/>
            <person name="Lei Y."/>
            <person name="Levitsky A.A."/>
            <person name="Li J.H."/>
            <person name="Li Z."/>
            <person name="Liang Y."/>
            <person name="Lin X."/>
            <person name="Liu X."/>
            <person name="Mattei B."/>
            <person name="McIntosh T.C."/>
            <person name="McLeod M.P."/>
            <person name="McPherson D."/>
            <person name="Merkulov G."/>
            <person name="Milshina N.V."/>
            <person name="Mobarry C."/>
            <person name="Morris J."/>
            <person name="Moshrefi A."/>
            <person name="Mount S.M."/>
            <person name="Moy M."/>
            <person name="Murphy B."/>
            <person name="Murphy L."/>
            <person name="Muzny D.M."/>
            <person name="Nelson D.L."/>
            <person name="Nelson D.R."/>
            <person name="Nelson K.A."/>
            <person name="Nixon K."/>
            <person name="Nusskern D.R."/>
            <person name="Pacleb J.M."/>
            <person name="Palazzolo M."/>
            <person name="Pittman G.S."/>
            <person name="Pan S."/>
            <person name="Pollard J."/>
            <person name="Puri V."/>
            <person name="Reese M.G."/>
            <person name="Reinert K."/>
            <person name="Remington K."/>
            <person name="Saunders R.D.C."/>
            <person name="Scheeler F."/>
            <person name="Shen H."/>
            <person name="Shue B.C."/>
            <person name="Siden-Kiamos I."/>
            <person name="Simpson M."/>
            <person name="Skupski M.P."/>
            <person name="Smith T.J."/>
            <person name="Spier E."/>
            <person name="Spradling A.C."/>
            <person name="Stapleton M."/>
            <person name="Strong R."/>
            <person name="Sun E."/>
            <person name="Svirskas R."/>
            <person name="Tector C."/>
            <person name="Turner R."/>
            <person name="Venter E."/>
            <person name="Wang A.H."/>
            <person name="Wang X."/>
            <person name="Wang Z.-Y."/>
            <person name="Wassarman D.A."/>
            <person name="Weinstock G.M."/>
            <person name="Weissenbach J."/>
            <person name="Williams S.M."/>
            <person name="Woodage T."/>
            <person name="Worley K.C."/>
            <person name="Wu D."/>
            <person name="Yang S."/>
            <person name="Yao Q.A."/>
            <person name="Ye J."/>
            <person name="Yeh R.-F."/>
            <person name="Zaveri J.S."/>
            <person name="Zhan M."/>
            <person name="Zhang G."/>
            <person name="Zhao Q."/>
            <person name="Zheng L."/>
            <person name="Zheng X.H."/>
            <person name="Zhong F.N."/>
            <person name="Zhong W."/>
            <person name="Zhou X."/>
            <person name="Zhu S.C."/>
            <person name="Zhu X."/>
            <person name="Smith H.O."/>
            <person name="Gibbs R.A."/>
            <person name="Myers E.W."/>
            <person name="Rubin G.M."/>
            <person name="Venter J.C."/>
        </authorList>
    </citation>
    <scope>NUCLEOTIDE SEQUENCE [LARGE SCALE GENOMIC DNA]</scope>
    <source>
        <strain>Berkeley</strain>
    </source>
</reference>
<reference key="4">
    <citation type="journal article" date="2002" name="Genome Biol.">
        <title>Annotation of the Drosophila melanogaster euchromatic genome: a systematic review.</title>
        <authorList>
            <person name="Misra S."/>
            <person name="Crosby M.A."/>
            <person name="Mungall C.J."/>
            <person name="Matthews B.B."/>
            <person name="Campbell K.S."/>
            <person name="Hradecky P."/>
            <person name="Huang Y."/>
            <person name="Kaminker J.S."/>
            <person name="Millburn G.H."/>
            <person name="Prochnik S.E."/>
            <person name="Smith C.D."/>
            <person name="Tupy J.L."/>
            <person name="Whitfield E.J."/>
            <person name="Bayraktaroglu L."/>
            <person name="Berman B.P."/>
            <person name="Bettencourt B.R."/>
            <person name="Celniker S.E."/>
            <person name="de Grey A.D.N.J."/>
            <person name="Drysdale R.A."/>
            <person name="Harris N.L."/>
            <person name="Richter J."/>
            <person name="Russo S."/>
            <person name="Schroeder A.J."/>
            <person name="Shu S.Q."/>
            <person name="Stapleton M."/>
            <person name="Yamada C."/>
            <person name="Ashburner M."/>
            <person name="Gelbart W.M."/>
            <person name="Rubin G.M."/>
            <person name="Lewis S.E."/>
        </authorList>
    </citation>
    <scope>GENOME REANNOTATION</scope>
    <scope>ALTERNATIVE SPLICING</scope>
    <source>
        <strain>Berkeley</strain>
    </source>
</reference>
<reference key="5">
    <citation type="submission" date="2002-03" db="EMBL/GenBank/DDBJ databases">
        <authorList>
            <person name="Stapleton M."/>
            <person name="Brokstein P."/>
            <person name="Hong L."/>
            <person name="Agbayani A."/>
            <person name="Carlson J.W."/>
            <person name="Champe M."/>
            <person name="Chavez C."/>
            <person name="Dorsett V."/>
            <person name="Dresnek D."/>
            <person name="Farfan D."/>
            <person name="Frise E."/>
            <person name="George R.A."/>
            <person name="Gonzalez M."/>
            <person name="Guarin H."/>
            <person name="Kronmiller B."/>
            <person name="Li P.W."/>
            <person name="Liao G."/>
            <person name="Miranda A."/>
            <person name="Mungall C.J."/>
            <person name="Nunoo J."/>
            <person name="Pacleb J.M."/>
            <person name="Paragas V."/>
            <person name="Park S."/>
            <person name="Patel S."/>
            <person name="Phouanenavong S."/>
            <person name="Wan K.H."/>
            <person name="Yu C."/>
            <person name="Lewis S.E."/>
            <person name="Rubin G.M."/>
            <person name="Celniker S.E."/>
        </authorList>
    </citation>
    <scope>NUCLEOTIDE SEQUENCE [LARGE SCALE MRNA] (ISOFORM 1)</scope>
    <source>
        <strain>Berkeley</strain>
        <tissue>Testis</tissue>
    </source>
</reference>
<organism>
    <name type="scientific">Drosophila melanogaster</name>
    <name type="common">Fruit fly</name>
    <dbReference type="NCBI Taxonomy" id="7227"/>
    <lineage>
        <taxon>Eukaryota</taxon>
        <taxon>Metazoa</taxon>
        <taxon>Ecdysozoa</taxon>
        <taxon>Arthropoda</taxon>
        <taxon>Hexapoda</taxon>
        <taxon>Insecta</taxon>
        <taxon>Pterygota</taxon>
        <taxon>Neoptera</taxon>
        <taxon>Endopterygota</taxon>
        <taxon>Diptera</taxon>
        <taxon>Brachycera</taxon>
        <taxon>Muscomorpha</taxon>
        <taxon>Ephydroidea</taxon>
        <taxon>Drosophilidae</taxon>
        <taxon>Drosophila</taxon>
        <taxon>Sophophora</taxon>
    </lineage>
</organism>
<dbReference type="EMBL" id="AJ000879">
    <property type="protein sequence ID" value="CAA04368.1"/>
    <property type="molecule type" value="Genomic_DNA"/>
</dbReference>
<dbReference type="EMBL" id="AJ000879">
    <property type="protein sequence ID" value="CAA04369.1"/>
    <property type="molecule type" value="Genomic_DNA"/>
</dbReference>
<dbReference type="EMBL" id="Y09068">
    <property type="protein sequence ID" value="CAA70289.1"/>
    <property type="molecule type" value="mRNA"/>
</dbReference>
<dbReference type="EMBL" id="Y09069">
    <property type="protein sequence ID" value="CAA70290.1"/>
    <property type="molecule type" value="mRNA"/>
</dbReference>
<dbReference type="EMBL" id="AE014296">
    <property type="protein sequence ID" value="AAF47479.1"/>
    <property type="molecule type" value="Genomic_DNA"/>
</dbReference>
<dbReference type="EMBL" id="AE014296">
    <property type="protein sequence ID" value="AAF47480.1"/>
    <property type="molecule type" value="Genomic_DNA"/>
</dbReference>
<dbReference type="EMBL" id="AY089404">
    <property type="protein sequence ID" value="AAL90142.1"/>
    <property type="molecule type" value="mRNA"/>
</dbReference>
<dbReference type="RefSeq" id="NP_477002.1">
    <molecule id="Q94519-2"/>
    <property type="nucleotide sequence ID" value="NM_057654.4"/>
</dbReference>
<dbReference type="RefSeq" id="NP_477003.1">
    <property type="nucleotide sequence ID" value="NM_057655.4"/>
</dbReference>
<dbReference type="PDB" id="8B9Z">
    <property type="method" value="EM"/>
    <property type="resolution" value="3.28 A"/>
    <property type="chains" value="T/U=68-152"/>
</dbReference>
<dbReference type="PDB" id="8BA0">
    <property type="method" value="EM"/>
    <property type="resolution" value="3.68 A"/>
    <property type="chains" value="T/U=1-152"/>
</dbReference>
<dbReference type="PDB" id="8ESW">
    <property type="method" value="EM"/>
    <property type="resolution" value="3.30 A"/>
    <property type="chains" value="AB/AC=1-152"/>
</dbReference>
<dbReference type="PDB" id="8ESZ">
    <property type="method" value="EM"/>
    <property type="resolution" value="3.40 A"/>
    <property type="chains" value="AB/AC=1-152"/>
</dbReference>
<dbReference type="PDBsum" id="8B9Z"/>
<dbReference type="PDBsum" id="8BA0"/>
<dbReference type="PDBsum" id="8ESW"/>
<dbReference type="PDBsum" id="8ESZ"/>
<dbReference type="EMDB" id="EMD-15936"/>
<dbReference type="EMDB" id="EMD-15937"/>
<dbReference type="EMDB" id="EMD-28581"/>
<dbReference type="EMDB" id="EMD-28582"/>
<dbReference type="SMR" id="Q94519"/>
<dbReference type="BioGRID" id="63697">
    <property type="interactions" value="18"/>
</dbReference>
<dbReference type="ComplexPortal" id="CPX-8628">
    <property type="entry name" value="Mitochondrial respiratory chain complex I"/>
</dbReference>
<dbReference type="ComplexPortal" id="CPX-8638">
    <property type="entry name" value="Mitochondrial respiratory chain complex I, testis-specific variant"/>
</dbReference>
<dbReference type="FunCoup" id="Q94519">
    <property type="interactions" value="1770"/>
</dbReference>
<dbReference type="IntAct" id="Q94519">
    <property type="interactions" value="81"/>
</dbReference>
<dbReference type="STRING" id="7227.FBpp0304248"/>
<dbReference type="SwissPalm" id="Q94519"/>
<dbReference type="DNASU" id="38154"/>
<dbReference type="EnsemblMetazoa" id="FBtr0072677">
    <molecule id="Q94519-2"/>
    <property type="protein sequence ID" value="FBpp0072570"/>
    <property type="gene ID" value="FBgn0011361"/>
</dbReference>
<dbReference type="GeneID" id="38154"/>
<dbReference type="KEGG" id="dme:Dmel_CG9160"/>
<dbReference type="AGR" id="FB:FBgn0011361"/>
<dbReference type="CTD" id="38154"/>
<dbReference type="FlyBase" id="FBgn0011361">
    <property type="gene designation" value="ND-ACP"/>
</dbReference>
<dbReference type="VEuPathDB" id="VectorBase:FBgn0011361"/>
<dbReference type="GeneTree" id="ENSGT00390000002127"/>
<dbReference type="HOGENOM" id="CLU_108696_0_1_1"/>
<dbReference type="InParanoid" id="Q94519"/>
<dbReference type="OrthoDB" id="448946at2759"/>
<dbReference type="PhylomeDB" id="Q94519"/>
<dbReference type="Reactome" id="R-DME-611105">
    <property type="pathway name" value="Respiratory electron transport"/>
</dbReference>
<dbReference type="Reactome" id="R-DME-6799198">
    <property type="pathway name" value="Complex I biogenesis"/>
</dbReference>
<dbReference type="Reactome" id="R-DME-77289">
    <property type="pathway name" value="Mitochondrial Fatty Acid Beta-Oxidation"/>
</dbReference>
<dbReference type="Reactome" id="R-DME-9857492">
    <property type="pathway name" value="Protein lipoylation"/>
</dbReference>
<dbReference type="SignaLink" id="Q94519"/>
<dbReference type="BioGRID-ORCS" id="38154">
    <property type="hits" value="1 hit in 1 CRISPR screen"/>
</dbReference>
<dbReference type="GenomeRNAi" id="38154"/>
<dbReference type="PRO" id="PR:Q94519"/>
<dbReference type="Proteomes" id="UP000000803">
    <property type="component" value="Chromosome 3L"/>
</dbReference>
<dbReference type="Bgee" id="FBgn0011361">
    <property type="expression patterns" value="Expressed in spermatocyte in testis and 265 other cell types or tissues"/>
</dbReference>
<dbReference type="ExpressionAtlas" id="Q94519">
    <property type="expression patterns" value="baseline and differential"/>
</dbReference>
<dbReference type="GO" id="GO:0099128">
    <property type="term" value="C:mitochondrial [2Fe-2S] assembly complex"/>
    <property type="evidence" value="ECO:0000250"/>
    <property type="project" value="FlyBase"/>
</dbReference>
<dbReference type="GO" id="GO:0005743">
    <property type="term" value="C:mitochondrial inner membrane"/>
    <property type="evidence" value="ECO:0000305"/>
    <property type="project" value="FlyBase"/>
</dbReference>
<dbReference type="GO" id="GO:0005739">
    <property type="term" value="C:mitochondrion"/>
    <property type="evidence" value="ECO:0000247"/>
    <property type="project" value="FlyBase"/>
</dbReference>
<dbReference type="GO" id="GO:0045271">
    <property type="term" value="C:respiratory chain complex I"/>
    <property type="evidence" value="ECO:0000314"/>
    <property type="project" value="FlyBase"/>
</dbReference>
<dbReference type="GO" id="GO:0000035">
    <property type="term" value="F:acyl binding"/>
    <property type="evidence" value="ECO:0000318"/>
    <property type="project" value="GO_Central"/>
</dbReference>
<dbReference type="GO" id="GO:0000036">
    <property type="term" value="F:acyl carrier activity"/>
    <property type="evidence" value="ECO:0000318"/>
    <property type="project" value="GO_Central"/>
</dbReference>
<dbReference type="GO" id="GO:0005198">
    <property type="term" value="F:structural molecule activity"/>
    <property type="evidence" value="ECO:0000250"/>
    <property type="project" value="FlyBase"/>
</dbReference>
<dbReference type="GO" id="GO:0044571">
    <property type="term" value="P:[2Fe-2S] cluster assembly"/>
    <property type="evidence" value="ECO:0000250"/>
    <property type="project" value="FlyBase"/>
</dbReference>
<dbReference type="GO" id="GO:0006120">
    <property type="term" value="P:mitochondrial electron transport, NADH to ubiquinone"/>
    <property type="evidence" value="ECO:0000305"/>
    <property type="project" value="FlyBase"/>
</dbReference>
<dbReference type="FunFam" id="1.10.1200.10:FF:000008">
    <property type="entry name" value="Acyl carrier protein"/>
    <property type="match status" value="1"/>
</dbReference>
<dbReference type="Gene3D" id="1.10.1200.10">
    <property type="entry name" value="ACP-like"/>
    <property type="match status" value="1"/>
</dbReference>
<dbReference type="HAMAP" id="MF_01217">
    <property type="entry name" value="Acyl_carrier"/>
    <property type="match status" value="1"/>
</dbReference>
<dbReference type="InterPro" id="IPR003231">
    <property type="entry name" value="ACP"/>
</dbReference>
<dbReference type="InterPro" id="IPR036736">
    <property type="entry name" value="ACP-like_sf"/>
</dbReference>
<dbReference type="InterPro" id="IPR009081">
    <property type="entry name" value="PP-bd_ACP"/>
</dbReference>
<dbReference type="NCBIfam" id="NF002148">
    <property type="entry name" value="PRK00982.1-2"/>
    <property type="match status" value="1"/>
</dbReference>
<dbReference type="PANTHER" id="PTHR20863">
    <property type="entry name" value="ACYL CARRIER PROTEIN"/>
    <property type="match status" value="1"/>
</dbReference>
<dbReference type="PANTHER" id="PTHR20863:SF28">
    <property type="entry name" value="ACYL CARRIER PROTEIN, MITOCHONDRIAL"/>
    <property type="match status" value="1"/>
</dbReference>
<dbReference type="Pfam" id="PF00550">
    <property type="entry name" value="PP-binding"/>
    <property type="match status" value="1"/>
</dbReference>
<dbReference type="SUPFAM" id="SSF47336">
    <property type="entry name" value="ACP-like"/>
    <property type="match status" value="1"/>
</dbReference>
<dbReference type="PROSITE" id="PS50075">
    <property type="entry name" value="CARRIER"/>
    <property type="match status" value="1"/>
</dbReference>
<comment type="function">
    <text evidence="1">Carrier of the growing fatty acid chain in fatty acid biosynthesis. Accessory and non-catalytic subunit of the mitochondrial membrane respiratory chain NADH dehydrogenase (Complex I), which functions in the transfer of electrons from NADH to the respiratory chain (By similarity).</text>
</comment>
<comment type="subunit">
    <text evidence="1">Complex I is composed of about 45 different subunits.</text>
</comment>
<comment type="subcellular location">
    <subcellularLocation>
        <location>Mitochondrion</location>
    </subcellularLocation>
</comment>
<comment type="alternative products">
    <event type="alternative splicing"/>
    <isoform>
        <id>Q94519-1</id>
        <name>2</name>
        <name>A</name>
        <sequence type="displayed"/>
    </isoform>
    <isoform>
        <id>Q94519-2</id>
        <name>1</name>
        <name>B</name>
        <sequence type="described" ref="VSP_000148"/>
    </isoform>
</comment>
<comment type="similarity">
    <text evidence="6">Belongs to the acyl carrier protein (ACP) family.</text>
</comment>
<gene>
    <name evidence="7" type="primary">ND-ACP</name>
    <name type="synonym">mtACP</name>
    <name evidence="7" type="synonym">mtacp1</name>
    <name type="synonym">ND-AcC</name>
    <name evidence="7" type="ORF">CG9160</name>
</gene>
<keyword id="KW-0002">3D-structure</keyword>
<keyword id="KW-0025">Alternative splicing</keyword>
<keyword id="KW-0249">Electron transport</keyword>
<keyword id="KW-0275">Fatty acid biosynthesis</keyword>
<keyword id="KW-0276">Fatty acid metabolism</keyword>
<keyword id="KW-0444">Lipid biosynthesis</keyword>
<keyword id="KW-0443">Lipid metabolism</keyword>
<keyword id="KW-0496">Mitochondrion</keyword>
<keyword id="KW-0596">Phosphopantetheine</keyword>
<keyword id="KW-0597">Phosphoprotein</keyword>
<keyword id="KW-1185">Reference proteome</keyword>
<keyword id="KW-0679">Respiratory chain</keyword>
<keyword id="KW-0809">Transit peptide</keyword>
<keyword id="KW-0813">Transport</keyword>
<evidence type="ECO:0000250" key="1"/>
<evidence type="ECO:0000255" key="2"/>
<evidence type="ECO:0000255" key="3">
    <source>
        <dbReference type="PROSITE-ProRule" id="PRU00258"/>
    </source>
</evidence>
<evidence type="ECO:0000303" key="4">
    <source ref="2"/>
</evidence>
<evidence type="ECO:0000303" key="5">
    <source ref="5"/>
</evidence>
<evidence type="ECO:0000305" key="6"/>
<evidence type="ECO:0000312" key="7">
    <source>
        <dbReference type="FlyBase" id="FBgn0011361"/>
    </source>
</evidence>
<evidence type="ECO:0007829" key="8">
    <source>
        <dbReference type="PDB" id="8B9Z"/>
    </source>
</evidence>
<protein>
    <recommendedName>
        <fullName>Acyl carrier protein, mitochondrial</fullName>
        <shortName>ACP</shortName>
    </recommendedName>
    <alternativeName>
        <fullName>NADH-ubiquinone oxidoreductase 9.6 kDa subunit</fullName>
    </alternativeName>
    <alternativeName>
        <fullName>NADH-ubiquinone oxidoreductase acyl-carrier subunit</fullName>
    </alternativeName>
</protein>
<accession>Q94519</accession>
<accession>Q94520</accession>
<accession>Q9W0G8</accession>
<accession>Q9W0G9</accession>
<feature type="transit peptide" description="Mitochondrion" evidence="2">
    <location>
        <begin position="1"/>
        <end status="unknown"/>
    </location>
</feature>
<feature type="chain" id="PRO_0000000563" description="Acyl carrier protein, mitochondrial">
    <location>
        <begin status="unknown"/>
        <end position="152"/>
    </location>
</feature>
<feature type="domain" description="Carrier" evidence="3">
    <location>
        <begin position="73"/>
        <end position="148"/>
    </location>
</feature>
<feature type="modified residue" description="O-(pantetheine 4'-phosphoryl)serine" evidence="3">
    <location>
        <position position="108"/>
    </location>
</feature>
<feature type="splice variant" id="VSP_000148" description="In isoform 1." evidence="4 5">
    <original>ECRGRWQTQLVRKYSAKPPLSLKLINERVLLVLKLYDKIDPS</original>
    <variation>KFGVRSYSAKSTIEDIKFRVLKVVSAYDKVTAE</variation>
    <location>
        <begin position="51"/>
        <end position="92"/>
    </location>
</feature>
<feature type="sequence conflict" description="In Ref. 3; AAF47480." evidence="6" ref="3">
    <original>K</original>
    <variation>R</variation>
    <location>
        <position position="63"/>
    </location>
</feature>
<feature type="helix" evidence="8">
    <location>
        <begin position="72"/>
        <end position="85"/>
    </location>
</feature>
<feature type="strand" evidence="8">
    <location>
        <begin position="86"/>
        <end position="88"/>
    </location>
</feature>
<feature type="turn" evidence="8">
    <location>
        <begin position="100"/>
        <end position="103"/>
    </location>
</feature>
<feature type="helix" evidence="8">
    <location>
        <begin position="108"/>
        <end position="122"/>
    </location>
</feature>
<feature type="helix" evidence="8">
    <location>
        <begin position="128"/>
        <end position="131"/>
    </location>
</feature>
<feature type="helix" evidence="8">
    <location>
        <begin position="137"/>
        <end position="144"/>
    </location>
</feature>
<sequence>MSFTQIARSCSRLAATLAPRRVASGILIQSQASRMMHRIAVPSMTSQLSQECRGRWQTQLVRKYSAKPPLSLKLINERVLLVLKLYDKIDPSKLNVESHFINDLGLDSLDHVEVIMAMEDEFGFEIPDSDAEKLLKPADIIKYVADKEDVYE</sequence>
<proteinExistence type="evidence at protein level"/>